<comment type="function">
    <text evidence="1">Catalyzes the acyloin condensation reaction between C atoms 2 and 3 of pyruvate and glyceraldehyde 3-phosphate to yield 1-deoxy-D-xylulose-5-phosphate (DXP).</text>
</comment>
<comment type="catalytic activity">
    <reaction evidence="1">
        <text>D-glyceraldehyde 3-phosphate + pyruvate + H(+) = 1-deoxy-D-xylulose 5-phosphate + CO2</text>
        <dbReference type="Rhea" id="RHEA:12605"/>
        <dbReference type="ChEBI" id="CHEBI:15361"/>
        <dbReference type="ChEBI" id="CHEBI:15378"/>
        <dbReference type="ChEBI" id="CHEBI:16526"/>
        <dbReference type="ChEBI" id="CHEBI:57792"/>
        <dbReference type="ChEBI" id="CHEBI:59776"/>
        <dbReference type="EC" id="2.2.1.7"/>
    </reaction>
</comment>
<comment type="cofactor">
    <cofactor evidence="1">
        <name>Mg(2+)</name>
        <dbReference type="ChEBI" id="CHEBI:18420"/>
    </cofactor>
    <text evidence="1">Binds 1 Mg(2+) ion per subunit.</text>
</comment>
<comment type="cofactor">
    <cofactor evidence="1">
        <name>thiamine diphosphate</name>
        <dbReference type="ChEBI" id="CHEBI:58937"/>
    </cofactor>
    <text evidence="1">Binds 1 thiamine pyrophosphate per subunit.</text>
</comment>
<comment type="pathway">
    <text evidence="1">Metabolic intermediate biosynthesis; 1-deoxy-D-xylulose 5-phosphate biosynthesis; 1-deoxy-D-xylulose 5-phosphate from D-glyceraldehyde 3-phosphate and pyruvate: step 1/1.</text>
</comment>
<comment type="subunit">
    <text evidence="1">Homodimer.</text>
</comment>
<comment type="similarity">
    <text evidence="1">Belongs to the transketolase family. DXPS subfamily.</text>
</comment>
<dbReference type="EC" id="2.2.1.7" evidence="1"/>
<dbReference type="EMBL" id="CP000095">
    <property type="protein sequence ID" value="AAZ57792.1"/>
    <property type="molecule type" value="Genomic_DNA"/>
</dbReference>
<dbReference type="RefSeq" id="WP_011293834.1">
    <property type="nucleotide sequence ID" value="NC_007335.2"/>
</dbReference>
<dbReference type="SMR" id="Q46L36"/>
<dbReference type="STRING" id="59920.PMN2A_0300"/>
<dbReference type="KEGG" id="pmn:PMN2A_0300"/>
<dbReference type="HOGENOM" id="CLU_009227_1_4_3"/>
<dbReference type="OrthoDB" id="9803371at2"/>
<dbReference type="PhylomeDB" id="Q46L36"/>
<dbReference type="UniPathway" id="UPA00064">
    <property type="reaction ID" value="UER00091"/>
</dbReference>
<dbReference type="Proteomes" id="UP000002535">
    <property type="component" value="Chromosome"/>
</dbReference>
<dbReference type="GO" id="GO:0005829">
    <property type="term" value="C:cytosol"/>
    <property type="evidence" value="ECO:0007669"/>
    <property type="project" value="TreeGrafter"/>
</dbReference>
<dbReference type="GO" id="GO:0008661">
    <property type="term" value="F:1-deoxy-D-xylulose-5-phosphate synthase activity"/>
    <property type="evidence" value="ECO:0007669"/>
    <property type="project" value="UniProtKB-UniRule"/>
</dbReference>
<dbReference type="GO" id="GO:0000287">
    <property type="term" value="F:magnesium ion binding"/>
    <property type="evidence" value="ECO:0007669"/>
    <property type="project" value="UniProtKB-UniRule"/>
</dbReference>
<dbReference type="GO" id="GO:0030976">
    <property type="term" value="F:thiamine pyrophosphate binding"/>
    <property type="evidence" value="ECO:0007669"/>
    <property type="project" value="UniProtKB-UniRule"/>
</dbReference>
<dbReference type="GO" id="GO:0052865">
    <property type="term" value="P:1-deoxy-D-xylulose 5-phosphate biosynthetic process"/>
    <property type="evidence" value="ECO:0007669"/>
    <property type="project" value="UniProtKB-UniPathway"/>
</dbReference>
<dbReference type="GO" id="GO:0019288">
    <property type="term" value="P:isopentenyl diphosphate biosynthetic process, methylerythritol 4-phosphate pathway"/>
    <property type="evidence" value="ECO:0007669"/>
    <property type="project" value="TreeGrafter"/>
</dbReference>
<dbReference type="GO" id="GO:0016114">
    <property type="term" value="P:terpenoid biosynthetic process"/>
    <property type="evidence" value="ECO:0007669"/>
    <property type="project" value="UniProtKB-UniRule"/>
</dbReference>
<dbReference type="GO" id="GO:0009228">
    <property type="term" value="P:thiamine biosynthetic process"/>
    <property type="evidence" value="ECO:0007669"/>
    <property type="project" value="UniProtKB-UniRule"/>
</dbReference>
<dbReference type="CDD" id="cd02007">
    <property type="entry name" value="TPP_DXS"/>
    <property type="match status" value="1"/>
</dbReference>
<dbReference type="CDD" id="cd07033">
    <property type="entry name" value="TPP_PYR_DXS_TK_like"/>
    <property type="match status" value="1"/>
</dbReference>
<dbReference type="FunFam" id="3.40.50.920:FF:000002">
    <property type="entry name" value="1-deoxy-D-xylulose-5-phosphate synthase"/>
    <property type="match status" value="1"/>
</dbReference>
<dbReference type="FunFam" id="3.40.50.970:FF:000005">
    <property type="entry name" value="1-deoxy-D-xylulose-5-phosphate synthase"/>
    <property type="match status" value="1"/>
</dbReference>
<dbReference type="Gene3D" id="3.40.50.920">
    <property type="match status" value="1"/>
</dbReference>
<dbReference type="Gene3D" id="3.40.50.970">
    <property type="match status" value="2"/>
</dbReference>
<dbReference type="HAMAP" id="MF_00315">
    <property type="entry name" value="DXP_synth"/>
    <property type="match status" value="1"/>
</dbReference>
<dbReference type="InterPro" id="IPR005477">
    <property type="entry name" value="Dxylulose-5-P_synthase"/>
</dbReference>
<dbReference type="InterPro" id="IPR029061">
    <property type="entry name" value="THDP-binding"/>
</dbReference>
<dbReference type="InterPro" id="IPR009014">
    <property type="entry name" value="Transketo_C/PFOR_II"/>
</dbReference>
<dbReference type="InterPro" id="IPR005475">
    <property type="entry name" value="Transketolase-like_Pyr-bd"/>
</dbReference>
<dbReference type="InterPro" id="IPR020826">
    <property type="entry name" value="Transketolase_BS"/>
</dbReference>
<dbReference type="InterPro" id="IPR033248">
    <property type="entry name" value="Transketolase_C"/>
</dbReference>
<dbReference type="InterPro" id="IPR049557">
    <property type="entry name" value="Transketolase_CS"/>
</dbReference>
<dbReference type="NCBIfam" id="TIGR00204">
    <property type="entry name" value="dxs"/>
    <property type="match status" value="1"/>
</dbReference>
<dbReference type="NCBIfam" id="NF003933">
    <property type="entry name" value="PRK05444.2-2"/>
    <property type="match status" value="1"/>
</dbReference>
<dbReference type="PANTHER" id="PTHR43322">
    <property type="entry name" value="1-D-DEOXYXYLULOSE 5-PHOSPHATE SYNTHASE-RELATED"/>
    <property type="match status" value="1"/>
</dbReference>
<dbReference type="PANTHER" id="PTHR43322:SF5">
    <property type="entry name" value="1-DEOXY-D-XYLULOSE-5-PHOSPHATE SYNTHASE, CHLOROPLASTIC"/>
    <property type="match status" value="1"/>
</dbReference>
<dbReference type="Pfam" id="PF13292">
    <property type="entry name" value="DXP_synthase_N"/>
    <property type="match status" value="1"/>
</dbReference>
<dbReference type="Pfam" id="PF02779">
    <property type="entry name" value="Transket_pyr"/>
    <property type="match status" value="1"/>
</dbReference>
<dbReference type="Pfam" id="PF02780">
    <property type="entry name" value="Transketolase_C"/>
    <property type="match status" value="1"/>
</dbReference>
<dbReference type="SMART" id="SM00861">
    <property type="entry name" value="Transket_pyr"/>
    <property type="match status" value="1"/>
</dbReference>
<dbReference type="SUPFAM" id="SSF52518">
    <property type="entry name" value="Thiamin diphosphate-binding fold (THDP-binding)"/>
    <property type="match status" value="2"/>
</dbReference>
<dbReference type="SUPFAM" id="SSF52922">
    <property type="entry name" value="TK C-terminal domain-like"/>
    <property type="match status" value="1"/>
</dbReference>
<dbReference type="PROSITE" id="PS00801">
    <property type="entry name" value="TRANSKETOLASE_1"/>
    <property type="match status" value="1"/>
</dbReference>
<dbReference type="PROSITE" id="PS00802">
    <property type="entry name" value="TRANSKETOLASE_2"/>
    <property type="match status" value="1"/>
</dbReference>
<organism>
    <name type="scientific">Prochlorococcus marinus (strain NATL2A)</name>
    <dbReference type="NCBI Taxonomy" id="59920"/>
    <lineage>
        <taxon>Bacteria</taxon>
        <taxon>Bacillati</taxon>
        <taxon>Cyanobacteriota</taxon>
        <taxon>Cyanophyceae</taxon>
        <taxon>Synechococcales</taxon>
        <taxon>Prochlorococcaceae</taxon>
        <taxon>Prochlorococcus</taxon>
    </lineage>
</organism>
<gene>
    <name evidence="1" type="primary">dxs</name>
    <name type="ordered locus">PMN2A_0300</name>
</gene>
<sequence length="628" mass="67821">MRLSQLSHPNELHGLAISELEDVACQIRERHLQVVSTSGGHLGPGLGVVELTIALYQTLDLDVDKVIWDVGHQAYPHKLLTGRYNRFDSLRQQKGVAGYLKRTESKFDHFGAGHASTSISAALGMAIARDRKGEDYKCVAVIGDGALTGGMALEAINHAGHLPKTPLLVVLNDNDMSISPPVGALSTYLNRMRHSPPVQFISDSVQESVKNLPFMGDAIQEEFKSLTGSVRRLAVPSVGAVFEELGFTYMGPVDGHDIAELTRTFNAAHKVGGPVMVHVATTKGKGYPYAEADQVGYHAQSSFDLTTGKSIPSKTPKPPSFSKVFGQTLVKLCEQDSKIVGITAAMAEGTALNLLQKAIPDQYVDVGIAEQHAVTLAGGMACEGIKPVVAIYSTFLQRAYDQLIHDIGIQNLPVTFVLDRAGIVGADGPTHQGQYDISYLRCIPNFTVMAPKDESELQQMLVTCINHNGPSALRIPRGSGEGAALMEEGWESLEIGKAETLEEGENLLIIGYGSMVFPAIRTAAILKEFGVNSTVINARFIRPLDEDTIHEAAKRIGKVVTMEEGTLLGGFGSAVVESFNDNDIFVPTLRIGIPDKLVDHATPQQSKESLGLTPEMMADQIRNKFNFN</sequence>
<evidence type="ECO:0000255" key="1">
    <source>
        <dbReference type="HAMAP-Rule" id="MF_00315"/>
    </source>
</evidence>
<protein>
    <recommendedName>
        <fullName evidence="1">1-deoxy-D-xylulose-5-phosphate synthase</fullName>
        <ecNumber evidence="1">2.2.1.7</ecNumber>
    </recommendedName>
    <alternativeName>
        <fullName evidence="1">1-deoxyxylulose-5-phosphate synthase</fullName>
        <shortName evidence="1">DXP synthase</shortName>
        <shortName evidence="1">DXPS</shortName>
    </alternativeName>
</protein>
<reference key="1">
    <citation type="journal article" date="2007" name="PLoS Genet.">
        <title>Patterns and implications of gene gain and loss in the evolution of Prochlorococcus.</title>
        <authorList>
            <person name="Kettler G.C."/>
            <person name="Martiny A.C."/>
            <person name="Huang K."/>
            <person name="Zucker J."/>
            <person name="Coleman M.L."/>
            <person name="Rodrigue S."/>
            <person name="Chen F."/>
            <person name="Lapidus A."/>
            <person name="Ferriera S."/>
            <person name="Johnson J."/>
            <person name="Steglich C."/>
            <person name="Church G.M."/>
            <person name="Richardson P."/>
            <person name="Chisholm S.W."/>
        </authorList>
    </citation>
    <scope>NUCLEOTIDE SEQUENCE [LARGE SCALE GENOMIC DNA]</scope>
    <source>
        <strain>NATL2A</strain>
    </source>
</reference>
<name>DXS_PROMT</name>
<feature type="chain" id="PRO_0000256457" description="1-deoxy-D-xylulose-5-phosphate synthase">
    <location>
        <begin position="1"/>
        <end position="628"/>
    </location>
</feature>
<feature type="binding site" evidence="1">
    <location>
        <position position="72"/>
    </location>
    <ligand>
        <name>thiamine diphosphate</name>
        <dbReference type="ChEBI" id="CHEBI:58937"/>
    </ligand>
</feature>
<feature type="binding site" evidence="1">
    <location>
        <begin position="113"/>
        <end position="115"/>
    </location>
    <ligand>
        <name>thiamine diphosphate</name>
        <dbReference type="ChEBI" id="CHEBI:58937"/>
    </ligand>
</feature>
<feature type="binding site" evidence="1">
    <location>
        <position position="144"/>
    </location>
    <ligand>
        <name>Mg(2+)</name>
        <dbReference type="ChEBI" id="CHEBI:18420"/>
    </ligand>
</feature>
<feature type="binding site" evidence="1">
    <location>
        <begin position="145"/>
        <end position="146"/>
    </location>
    <ligand>
        <name>thiamine diphosphate</name>
        <dbReference type="ChEBI" id="CHEBI:58937"/>
    </ligand>
</feature>
<feature type="binding site" evidence="1">
    <location>
        <position position="174"/>
    </location>
    <ligand>
        <name>Mg(2+)</name>
        <dbReference type="ChEBI" id="CHEBI:18420"/>
    </ligand>
</feature>
<feature type="binding site" evidence="1">
    <location>
        <position position="174"/>
    </location>
    <ligand>
        <name>thiamine diphosphate</name>
        <dbReference type="ChEBI" id="CHEBI:58937"/>
    </ligand>
</feature>
<feature type="binding site" evidence="1">
    <location>
        <position position="287"/>
    </location>
    <ligand>
        <name>thiamine diphosphate</name>
        <dbReference type="ChEBI" id="CHEBI:58937"/>
    </ligand>
</feature>
<feature type="binding site" evidence="1">
    <location>
        <position position="370"/>
    </location>
    <ligand>
        <name>thiamine diphosphate</name>
        <dbReference type="ChEBI" id="CHEBI:58937"/>
    </ligand>
</feature>
<accession>Q46L36</accession>
<keyword id="KW-0414">Isoprene biosynthesis</keyword>
<keyword id="KW-0460">Magnesium</keyword>
<keyword id="KW-0479">Metal-binding</keyword>
<keyword id="KW-1185">Reference proteome</keyword>
<keyword id="KW-0784">Thiamine biosynthesis</keyword>
<keyword id="KW-0786">Thiamine pyrophosphate</keyword>
<keyword id="KW-0808">Transferase</keyword>
<proteinExistence type="inferred from homology"/>